<evidence type="ECO:0000255" key="1">
    <source>
        <dbReference type="HAMAP-Rule" id="MF_01396"/>
    </source>
</evidence>
<gene>
    <name evidence="1" type="primary">atpE</name>
    <name evidence="1" type="synonym">atpH</name>
    <name type="ordered locus">Pro_1608</name>
</gene>
<feature type="chain" id="PRO_0000365910" description="ATP synthase subunit c">
    <location>
        <begin position="1"/>
        <end position="82"/>
    </location>
</feature>
<feature type="transmembrane region" description="Helical" evidence="1">
    <location>
        <begin position="7"/>
        <end position="27"/>
    </location>
</feature>
<feature type="transmembrane region" description="Helical" evidence="1">
    <location>
        <begin position="57"/>
        <end position="77"/>
    </location>
</feature>
<feature type="site" description="Reversibly protonated during proton transport" evidence="1">
    <location>
        <position position="61"/>
    </location>
</feature>
<accession>Q7VA59</accession>
<organism>
    <name type="scientific">Prochlorococcus marinus (strain SARG / CCMP1375 / SS120)</name>
    <dbReference type="NCBI Taxonomy" id="167539"/>
    <lineage>
        <taxon>Bacteria</taxon>
        <taxon>Bacillati</taxon>
        <taxon>Cyanobacteriota</taxon>
        <taxon>Cyanophyceae</taxon>
        <taxon>Synechococcales</taxon>
        <taxon>Prochlorococcaceae</taxon>
        <taxon>Prochlorococcus</taxon>
    </lineage>
</organism>
<protein>
    <recommendedName>
        <fullName evidence="1">ATP synthase subunit c</fullName>
    </recommendedName>
    <alternativeName>
        <fullName evidence="1">ATP synthase F(0) sector subunit c</fullName>
    </alternativeName>
    <alternativeName>
        <fullName evidence="1">F-type ATPase subunit c</fullName>
        <shortName evidence="1">F-ATPase subunit c</shortName>
    </alternativeName>
    <alternativeName>
        <fullName evidence="1">Lipid-binding protein</fullName>
    </alternativeName>
</protein>
<reference key="1">
    <citation type="journal article" date="2003" name="Proc. Natl. Acad. Sci. U.S.A.">
        <title>Genome sequence of the cyanobacterium Prochlorococcus marinus SS120, a nearly minimal oxyphototrophic genome.</title>
        <authorList>
            <person name="Dufresne A."/>
            <person name="Salanoubat M."/>
            <person name="Partensky F."/>
            <person name="Artiguenave F."/>
            <person name="Axmann I.M."/>
            <person name="Barbe V."/>
            <person name="Duprat S."/>
            <person name="Galperin M.Y."/>
            <person name="Koonin E.V."/>
            <person name="Le Gall F."/>
            <person name="Makarova K.S."/>
            <person name="Ostrowski M."/>
            <person name="Oztas S."/>
            <person name="Robert C."/>
            <person name="Rogozin I.B."/>
            <person name="Scanlan D.J."/>
            <person name="Tandeau de Marsac N."/>
            <person name="Weissenbach J."/>
            <person name="Wincker P."/>
            <person name="Wolf Y.I."/>
            <person name="Hess W.R."/>
        </authorList>
    </citation>
    <scope>NUCLEOTIDE SEQUENCE [LARGE SCALE GENOMIC DNA]</scope>
    <source>
        <strain>SARG / CCMP1375 / SS120</strain>
    </source>
</reference>
<comment type="function">
    <text evidence="1">F(1)F(0) ATP synthase produces ATP from ADP in the presence of a proton or sodium gradient. F-type ATPases consist of two structural domains, F(1) containing the extramembraneous catalytic core and F(0) containing the membrane proton channel, linked together by a central stalk and a peripheral stalk. During catalysis, ATP synthesis in the catalytic domain of F(1) is coupled via a rotary mechanism of the central stalk subunits to proton translocation.</text>
</comment>
<comment type="function">
    <text evidence="1">Key component of the F(0) channel; it plays a direct role in translocation across the membrane. A homomeric c-ring of between 10-14 subunits forms the central stalk rotor element with the F(1) delta and epsilon subunits.</text>
</comment>
<comment type="subunit">
    <text evidence="1">F-type ATPases have 2 components, F(1) - the catalytic core - and F(0) - the membrane proton channel. F(1) has five subunits: alpha(3), beta(3), gamma(1), delta(1), epsilon(1). F(0) has four main subunits: a(1), b(1), b'(1) and c(10-14). The alpha and beta chains form an alternating ring which encloses part of the gamma chain. F(1) is attached to F(0) by a central stalk formed by the gamma and epsilon chains, while a peripheral stalk is formed by the delta, b and b' chains.</text>
</comment>
<comment type="subcellular location">
    <subcellularLocation>
        <location evidence="1">Cellular thylakoid membrane</location>
        <topology evidence="1">Multi-pass membrane protein</topology>
    </subcellularLocation>
</comment>
<comment type="similarity">
    <text evidence="1">Belongs to the ATPase C chain family.</text>
</comment>
<name>ATPL_PROMA</name>
<dbReference type="EMBL" id="AE017126">
    <property type="protein sequence ID" value="AAQ00652.1"/>
    <property type="molecule type" value="Genomic_DNA"/>
</dbReference>
<dbReference type="RefSeq" id="NP_875999.1">
    <property type="nucleotide sequence ID" value="NC_005042.1"/>
</dbReference>
<dbReference type="RefSeq" id="WP_011125758.1">
    <property type="nucleotide sequence ID" value="NC_005042.1"/>
</dbReference>
<dbReference type="SMR" id="Q7VA59"/>
<dbReference type="STRING" id="167539.Pro_1608"/>
<dbReference type="EnsemblBacteria" id="AAQ00652">
    <property type="protein sequence ID" value="AAQ00652"/>
    <property type="gene ID" value="Pro_1608"/>
</dbReference>
<dbReference type="KEGG" id="pma:Pro_1608"/>
<dbReference type="PATRIC" id="fig|167539.5.peg.1699"/>
<dbReference type="eggNOG" id="COG0636">
    <property type="taxonomic scope" value="Bacteria"/>
</dbReference>
<dbReference type="HOGENOM" id="CLU_148047_2_0_3"/>
<dbReference type="OrthoDB" id="9810379at2"/>
<dbReference type="Proteomes" id="UP000001420">
    <property type="component" value="Chromosome"/>
</dbReference>
<dbReference type="GO" id="GO:0031676">
    <property type="term" value="C:plasma membrane-derived thylakoid membrane"/>
    <property type="evidence" value="ECO:0007669"/>
    <property type="project" value="UniProtKB-SubCell"/>
</dbReference>
<dbReference type="GO" id="GO:0045259">
    <property type="term" value="C:proton-transporting ATP synthase complex"/>
    <property type="evidence" value="ECO:0007669"/>
    <property type="project" value="UniProtKB-KW"/>
</dbReference>
<dbReference type="GO" id="GO:0033177">
    <property type="term" value="C:proton-transporting two-sector ATPase complex, proton-transporting domain"/>
    <property type="evidence" value="ECO:0007669"/>
    <property type="project" value="InterPro"/>
</dbReference>
<dbReference type="GO" id="GO:0008289">
    <property type="term" value="F:lipid binding"/>
    <property type="evidence" value="ECO:0007669"/>
    <property type="project" value="UniProtKB-KW"/>
</dbReference>
<dbReference type="GO" id="GO:0046933">
    <property type="term" value="F:proton-transporting ATP synthase activity, rotational mechanism"/>
    <property type="evidence" value="ECO:0007669"/>
    <property type="project" value="UniProtKB-UniRule"/>
</dbReference>
<dbReference type="CDD" id="cd18183">
    <property type="entry name" value="ATP-synt_Fo_c_ATPH"/>
    <property type="match status" value="1"/>
</dbReference>
<dbReference type="FunFam" id="1.20.20.10:FF:000001">
    <property type="entry name" value="ATP synthase subunit c, chloroplastic"/>
    <property type="match status" value="1"/>
</dbReference>
<dbReference type="Gene3D" id="1.20.20.10">
    <property type="entry name" value="F1F0 ATP synthase subunit C"/>
    <property type="match status" value="1"/>
</dbReference>
<dbReference type="HAMAP" id="MF_01396">
    <property type="entry name" value="ATP_synth_c_bact"/>
    <property type="match status" value="1"/>
</dbReference>
<dbReference type="InterPro" id="IPR005953">
    <property type="entry name" value="ATP_synth_csu_bac/chlpt"/>
</dbReference>
<dbReference type="InterPro" id="IPR000454">
    <property type="entry name" value="ATP_synth_F0_csu"/>
</dbReference>
<dbReference type="InterPro" id="IPR020537">
    <property type="entry name" value="ATP_synth_F0_csu_DDCD_BS"/>
</dbReference>
<dbReference type="InterPro" id="IPR038662">
    <property type="entry name" value="ATP_synth_F0_csu_sf"/>
</dbReference>
<dbReference type="InterPro" id="IPR002379">
    <property type="entry name" value="ATPase_proteolipid_c-like_dom"/>
</dbReference>
<dbReference type="InterPro" id="IPR035921">
    <property type="entry name" value="F/V-ATP_Csub_sf"/>
</dbReference>
<dbReference type="NCBIfam" id="TIGR01260">
    <property type="entry name" value="ATP_synt_c"/>
    <property type="match status" value="1"/>
</dbReference>
<dbReference type="NCBIfam" id="NF005608">
    <property type="entry name" value="PRK07354.1"/>
    <property type="match status" value="1"/>
</dbReference>
<dbReference type="PANTHER" id="PTHR10031">
    <property type="entry name" value="ATP SYNTHASE LIPID-BINDING PROTEIN, MITOCHONDRIAL"/>
    <property type="match status" value="1"/>
</dbReference>
<dbReference type="PANTHER" id="PTHR10031:SF0">
    <property type="entry name" value="ATPASE PROTEIN 9"/>
    <property type="match status" value="1"/>
</dbReference>
<dbReference type="Pfam" id="PF00137">
    <property type="entry name" value="ATP-synt_C"/>
    <property type="match status" value="1"/>
</dbReference>
<dbReference type="PRINTS" id="PR00124">
    <property type="entry name" value="ATPASEC"/>
</dbReference>
<dbReference type="SUPFAM" id="SSF81333">
    <property type="entry name" value="F1F0 ATP synthase subunit C"/>
    <property type="match status" value="1"/>
</dbReference>
<dbReference type="PROSITE" id="PS00605">
    <property type="entry name" value="ATPASE_C"/>
    <property type="match status" value="1"/>
</dbReference>
<keyword id="KW-0066">ATP synthesis</keyword>
<keyword id="KW-0138">CF(0)</keyword>
<keyword id="KW-0375">Hydrogen ion transport</keyword>
<keyword id="KW-0406">Ion transport</keyword>
<keyword id="KW-0446">Lipid-binding</keyword>
<keyword id="KW-0472">Membrane</keyword>
<keyword id="KW-1185">Reference proteome</keyword>
<keyword id="KW-0793">Thylakoid</keyword>
<keyword id="KW-0812">Transmembrane</keyword>
<keyword id="KW-1133">Transmembrane helix</keyword>
<keyword id="KW-0813">Transport</keyword>
<sequence>MDSITTAASVVAAGLAVGLGAIGPGIGQGSAAQGAVEGIARQPEAEGKIRGTLLLSFAFMESLTIYGLVVALVLLFANPFAG</sequence>
<proteinExistence type="inferred from homology"/>